<feature type="chain" id="PRO_1000117708" description="Protein NrdI">
    <location>
        <begin position="1"/>
        <end position="136"/>
    </location>
</feature>
<gene>
    <name evidence="1" type="primary">nrdI</name>
    <name type="ordered locus">ECIAI39_2864</name>
</gene>
<organism>
    <name type="scientific">Escherichia coli O7:K1 (strain IAI39 / ExPEC)</name>
    <dbReference type="NCBI Taxonomy" id="585057"/>
    <lineage>
        <taxon>Bacteria</taxon>
        <taxon>Pseudomonadati</taxon>
        <taxon>Pseudomonadota</taxon>
        <taxon>Gammaproteobacteria</taxon>
        <taxon>Enterobacterales</taxon>
        <taxon>Enterobacteriaceae</taxon>
        <taxon>Escherichia</taxon>
    </lineage>
</organism>
<protein>
    <recommendedName>
        <fullName evidence="1">Protein NrdI</fullName>
    </recommendedName>
</protein>
<comment type="function">
    <text evidence="1">Probably involved in ribonucleotide reductase function.</text>
</comment>
<comment type="similarity">
    <text evidence="1">Belongs to the NrdI family.</text>
</comment>
<proteinExistence type="inferred from homology"/>
<sequence length="136" mass="15370">MSQLVYFSSSSENTQRFIERLGLPAVRIPLNERERIQVDEPYILIVPSYGGGGTTGAVPRQVIRFLNDEHNRALLRGVIASGNRNFGEAYGRAGDVIARKCGVPWLYRFELMGTQSDIENVRKGVTEFWQRQPQNA</sequence>
<dbReference type="EMBL" id="CU928164">
    <property type="protein sequence ID" value="CAR18986.1"/>
    <property type="molecule type" value="Genomic_DNA"/>
</dbReference>
<dbReference type="RefSeq" id="WP_000080958.1">
    <property type="nucleotide sequence ID" value="NC_011750.1"/>
</dbReference>
<dbReference type="RefSeq" id="YP_002408798.1">
    <property type="nucleotide sequence ID" value="NC_011750.1"/>
</dbReference>
<dbReference type="SMR" id="B7NSF9"/>
<dbReference type="STRING" id="585057.ECIAI39_2864"/>
<dbReference type="KEGG" id="ect:ECIAI39_2864"/>
<dbReference type="PATRIC" id="fig|585057.6.peg.2971"/>
<dbReference type="HOGENOM" id="CLU_114845_0_0_6"/>
<dbReference type="Proteomes" id="UP000000749">
    <property type="component" value="Chromosome"/>
</dbReference>
<dbReference type="GO" id="GO:0010181">
    <property type="term" value="F:FMN binding"/>
    <property type="evidence" value="ECO:0007669"/>
    <property type="project" value="InterPro"/>
</dbReference>
<dbReference type="GO" id="GO:0036211">
    <property type="term" value="P:protein modification process"/>
    <property type="evidence" value="ECO:0007669"/>
    <property type="project" value="InterPro"/>
</dbReference>
<dbReference type="FunFam" id="3.40.50.360:FF:000005">
    <property type="entry name" value="Protein NrdI"/>
    <property type="match status" value="1"/>
</dbReference>
<dbReference type="Gene3D" id="3.40.50.360">
    <property type="match status" value="1"/>
</dbReference>
<dbReference type="HAMAP" id="MF_00128">
    <property type="entry name" value="NrdI"/>
    <property type="match status" value="1"/>
</dbReference>
<dbReference type="InterPro" id="IPR029039">
    <property type="entry name" value="Flavoprotein-like_sf"/>
</dbReference>
<dbReference type="InterPro" id="IPR020852">
    <property type="entry name" value="RNR_Ib_NrdI_bac"/>
</dbReference>
<dbReference type="InterPro" id="IPR004465">
    <property type="entry name" value="RNR_NrdI"/>
</dbReference>
<dbReference type="NCBIfam" id="TIGR00333">
    <property type="entry name" value="nrdI"/>
    <property type="match status" value="1"/>
</dbReference>
<dbReference type="PANTHER" id="PTHR37297">
    <property type="entry name" value="PROTEIN NRDI"/>
    <property type="match status" value="1"/>
</dbReference>
<dbReference type="PANTHER" id="PTHR37297:SF1">
    <property type="entry name" value="PROTEIN NRDI"/>
    <property type="match status" value="1"/>
</dbReference>
<dbReference type="Pfam" id="PF07972">
    <property type="entry name" value="Flavodoxin_NdrI"/>
    <property type="match status" value="1"/>
</dbReference>
<dbReference type="PIRSF" id="PIRSF005087">
    <property type="entry name" value="NrdI"/>
    <property type="match status" value="1"/>
</dbReference>
<dbReference type="SUPFAM" id="SSF52218">
    <property type="entry name" value="Flavoproteins"/>
    <property type="match status" value="1"/>
</dbReference>
<accession>B7NSF9</accession>
<reference key="1">
    <citation type="journal article" date="2009" name="PLoS Genet.">
        <title>Organised genome dynamics in the Escherichia coli species results in highly diverse adaptive paths.</title>
        <authorList>
            <person name="Touchon M."/>
            <person name="Hoede C."/>
            <person name="Tenaillon O."/>
            <person name="Barbe V."/>
            <person name="Baeriswyl S."/>
            <person name="Bidet P."/>
            <person name="Bingen E."/>
            <person name="Bonacorsi S."/>
            <person name="Bouchier C."/>
            <person name="Bouvet O."/>
            <person name="Calteau A."/>
            <person name="Chiapello H."/>
            <person name="Clermont O."/>
            <person name="Cruveiller S."/>
            <person name="Danchin A."/>
            <person name="Diard M."/>
            <person name="Dossat C."/>
            <person name="Karoui M.E."/>
            <person name="Frapy E."/>
            <person name="Garry L."/>
            <person name="Ghigo J.M."/>
            <person name="Gilles A.M."/>
            <person name="Johnson J."/>
            <person name="Le Bouguenec C."/>
            <person name="Lescat M."/>
            <person name="Mangenot S."/>
            <person name="Martinez-Jehanne V."/>
            <person name="Matic I."/>
            <person name="Nassif X."/>
            <person name="Oztas S."/>
            <person name="Petit M.A."/>
            <person name="Pichon C."/>
            <person name="Rouy Z."/>
            <person name="Ruf C.S."/>
            <person name="Schneider D."/>
            <person name="Tourret J."/>
            <person name="Vacherie B."/>
            <person name="Vallenet D."/>
            <person name="Medigue C."/>
            <person name="Rocha E.P.C."/>
            <person name="Denamur E."/>
        </authorList>
    </citation>
    <scope>NUCLEOTIDE SEQUENCE [LARGE SCALE GENOMIC DNA]</scope>
    <source>
        <strain>IAI39 / ExPEC</strain>
    </source>
</reference>
<name>NRDI_ECO7I</name>
<evidence type="ECO:0000255" key="1">
    <source>
        <dbReference type="HAMAP-Rule" id="MF_00128"/>
    </source>
</evidence>